<evidence type="ECO:0000255" key="1">
    <source>
        <dbReference type="HAMAP-Rule" id="MF_00531"/>
    </source>
</evidence>
<evidence type="ECO:0000305" key="2"/>
<keyword id="KW-0687">Ribonucleoprotein</keyword>
<keyword id="KW-0689">Ribosomal protein</keyword>
<keyword id="KW-0694">RNA-binding</keyword>
<keyword id="KW-0699">rRNA-binding</keyword>
<sequence length="93" mass="10384">MSRSVKKGPALCPKLMKKVEVASATNQKSIIKTWARWSTITPLMVGLNVGVHDGRRHVPIYITENMVGHKLGEFTTTRNFRGHAKAEKVSQVK</sequence>
<comment type="function">
    <text evidence="1">Protein S19 forms a complex with S13 that binds strongly to the 16S ribosomal RNA.</text>
</comment>
<comment type="similarity">
    <text evidence="1">Belongs to the universal ribosomal protein uS19 family.</text>
</comment>
<accession>Q3ZZM0</accession>
<proteinExistence type="inferred from homology"/>
<feature type="chain" id="PRO_0000265355" description="Small ribosomal subunit protein uS19">
    <location>
        <begin position="1"/>
        <end position="93"/>
    </location>
</feature>
<gene>
    <name evidence="1" type="primary">rpsS</name>
    <name type="ordered locus">cbdbA443</name>
</gene>
<dbReference type="EMBL" id="AJ965256">
    <property type="protein sequence ID" value="CAI82643.1"/>
    <property type="molecule type" value="Genomic_DNA"/>
</dbReference>
<dbReference type="RefSeq" id="WP_011309000.1">
    <property type="nucleotide sequence ID" value="NC_007356.1"/>
</dbReference>
<dbReference type="SMR" id="Q3ZZM0"/>
<dbReference type="KEGG" id="deh:cbdbA443"/>
<dbReference type="HOGENOM" id="CLU_144911_0_1_0"/>
<dbReference type="Proteomes" id="UP000000433">
    <property type="component" value="Chromosome"/>
</dbReference>
<dbReference type="GO" id="GO:0005737">
    <property type="term" value="C:cytoplasm"/>
    <property type="evidence" value="ECO:0007669"/>
    <property type="project" value="UniProtKB-ARBA"/>
</dbReference>
<dbReference type="GO" id="GO:0015935">
    <property type="term" value="C:small ribosomal subunit"/>
    <property type="evidence" value="ECO:0007669"/>
    <property type="project" value="InterPro"/>
</dbReference>
<dbReference type="GO" id="GO:0019843">
    <property type="term" value="F:rRNA binding"/>
    <property type="evidence" value="ECO:0007669"/>
    <property type="project" value="UniProtKB-UniRule"/>
</dbReference>
<dbReference type="GO" id="GO:0003735">
    <property type="term" value="F:structural constituent of ribosome"/>
    <property type="evidence" value="ECO:0007669"/>
    <property type="project" value="InterPro"/>
</dbReference>
<dbReference type="GO" id="GO:0000028">
    <property type="term" value="P:ribosomal small subunit assembly"/>
    <property type="evidence" value="ECO:0007669"/>
    <property type="project" value="TreeGrafter"/>
</dbReference>
<dbReference type="GO" id="GO:0006412">
    <property type="term" value="P:translation"/>
    <property type="evidence" value="ECO:0007669"/>
    <property type="project" value="UniProtKB-UniRule"/>
</dbReference>
<dbReference type="FunFam" id="3.30.860.10:FF:000001">
    <property type="entry name" value="30S ribosomal protein S19"/>
    <property type="match status" value="1"/>
</dbReference>
<dbReference type="Gene3D" id="3.30.860.10">
    <property type="entry name" value="30s Ribosomal Protein S19, Chain A"/>
    <property type="match status" value="1"/>
</dbReference>
<dbReference type="HAMAP" id="MF_00531">
    <property type="entry name" value="Ribosomal_uS19"/>
    <property type="match status" value="1"/>
</dbReference>
<dbReference type="InterPro" id="IPR002222">
    <property type="entry name" value="Ribosomal_uS19"/>
</dbReference>
<dbReference type="InterPro" id="IPR005732">
    <property type="entry name" value="Ribosomal_uS19_bac-type"/>
</dbReference>
<dbReference type="InterPro" id="IPR020934">
    <property type="entry name" value="Ribosomal_uS19_CS"/>
</dbReference>
<dbReference type="InterPro" id="IPR023575">
    <property type="entry name" value="Ribosomal_uS19_SF"/>
</dbReference>
<dbReference type="NCBIfam" id="TIGR01050">
    <property type="entry name" value="rpsS_bact"/>
    <property type="match status" value="1"/>
</dbReference>
<dbReference type="PANTHER" id="PTHR11880">
    <property type="entry name" value="RIBOSOMAL PROTEIN S19P FAMILY MEMBER"/>
    <property type="match status" value="1"/>
</dbReference>
<dbReference type="PANTHER" id="PTHR11880:SF8">
    <property type="entry name" value="SMALL RIBOSOMAL SUBUNIT PROTEIN US19M"/>
    <property type="match status" value="1"/>
</dbReference>
<dbReference type="Pfam" id="PF00203">
    <property type="entry name" value="Ribosomal_S19"/>
    <property type="match status" value="1"/>
</dbReference>
<dbReference type="PIRSF" id="PIRSF002144">
    <property type="entry name" value="Ribosomal_S19"/>
    <property type="match status" value="1"/>
</dbReference>
<dbReference type="PRINTS" id="PR00975">
    <property type="entry name" value="RIBOSOMALS19"/>
</dbReference>
<dbReference type="SUPFAM" id="SSF54570">
    <property type="entry name" value="Ribosomal protein S19"/>
    <property type="match status" value="1"/>
</dbReference>
<dbReference type="PROSITE" id="PS00323">
    <property type="entry name" value="RIBOSOMAL_S19"/>
    <property type="match status" value="1"/>
</dbReference>
<organism>
    <name type="scientific">Dehalococcoides mccartyi (strain CBDB1)</name>
    <dbReference type="NCBI Taxonomy" id="255470"/>
    <lineage>
        <taxon>Bacteria</taxon>
        <taxon>Bacillati</taxon>
        <taxon>Chloroflexota</taxon>
        <taxon>Dehalococcoidia</taxon>
        <taxon>Dehalococcoidales</taxon>
        <taxon>Dehalococcoidaceae</taxon>
        <taxon>Dehalococcoides</taxon>
    </lineage>
</organism>
<protein>
    <recommendedName>
        <fullName evidence="1">Small ribosomal subunit protein uS19</fullName>
    </recommendedName>
    <alternativeName>
        <fullName evidence="2">30S ribosomal protein S19</fullName>
    </alternativeName>
</protein>
<reference key="1">
    <citation type="journal article" date="2005" name="Nat. Biotechnol.">
        <title>Genome sequence of the chlorinated compound-respiring bacterium Dehalococcoides species strain CBDB1.</title>
        <authorList>
            <person name="Kube M."/>
            <person name="Beck A."/>
            <person name="Zinder S.H."/>
            <person name="Kuhl H."/>
            <person name="Reinhardt R."/>
            <person name="Adrian L."/>
        </authorList>
    </citation>
    <scope>NUCLEOTIDE SEQUENCE [LARGE SCALE GENOMIC DNA]</scope>
    <source>
        <strain>CBDB1</strain>
    </source>
</reference>
<name>RS19_DEHMC</name>